<feature type="chain" id="PRO_0000422075" description="Sterol 3-beta-glucosyltransferase UGT80B1">
    <location>
        <begin position="1"/>
        <end position="615"/>
    </location>
</feature>
<feature type="region of interest" description="Disordered" evidence="1">
    <location>
        <begin position="1"/>
        <end position="54"/>
    </location>
</feature>
<feature type="compositionally biased region" description="Basic and acidic residues" evidence="1">
    <location>
        <begin position="40"/>
        <end position="54"/>
    </location>
</feature>
<comment type="function">
    <text evidence="2 3">Involved in the biosynthesis of sterol glucosides. Catalyzes the synthesis of steryl glycosides (SGs) and acyl steryl glycosides (ASGs) which are the most abundant sterol derivatives in higher plants. Can act on several sterols like sitosterol, campesterol and stigmasterol. Is required for embryonic development, seed suberin accumulation, cutin formation and flavanoid accumulation in the seed coat. Both UGT80A2 and UGT80B1 are required for the normal production of SGs and ASGs in seeds.</text>
</comment>
<comment type="catalytic activity">
    <reaction evidence="2">
        <text>a sterol + UDP-alpha-D-glucose = a sterol 3-beta-D-glucoside + UDP + H(+)</text>
        <dbReference type="Rhea" id="RHEA:22724"/>
        <dbReference type="ChEBI" id="CHEBI:15378"/>
        <dbReference type="ChEBI" id="CHEBI:15889"/>
        <dbReference type="ChEBI" id="CHEBI:37424"/>
        <dbReference type="ChEBI" id="CHEBI:58223"/>
        <dbReference type="ChEBI" id="CHEBI:58885"/>
        <dbReference type="EC" id="2.4.1.173"/>
    </reaction>
    <physiologicalReaction direction="left-to-right" evidence="2">
        <dbReference type="Rhea" id="RHEA:22725"/>
    </physiologicalReaction>
</comment>
<comment type="tissue specificity">
    <text evidence="2">Expressed in developing seeds, seedlings, leaves and around the apical tip of cotyledons. In embryo, expressed in the seed coat and cotyledons.</text>
</comment>
<comment type="disruption phenotype">
    <text evidence="2">Reduced growth rates. Altered embryonic development, seed suberin accumulation, cutin formation in the seed coat and reduced seed size. Lack of flavanoid accumulation in the seed coat (transparent testa phenotype).</text>
</comment>
<comment type="similarity">
    <text evidence="5">Belongs to the glycosyltransferase 28 family.</text>
</comment>
<organism>
    <name type="scientific">Arabidopsis thaliana</name>
    <name type="common">Mouse-ear cress</name>
    <dbReference type="NCBI Taxonomy" id="3702"/>
    <lineage>
        <taxon>Eukaryota</taxon>
        <taxon>Viridiplantae</taxon>
        <taxon>Streptophyta</taxon>
        <taxon>Embryophyta</taxon>
        <taxon>Tracheophyta</taxon>
        <taxon>Spermatophyta</taxon>
        <taxon>Magnoliopsida</taxon>
        <taxon>eudicotyledons</taxon>
        <taxon>Gunneridae</taxon>
        <taxon>Pentapetalae</taxon>
        <taxon>rosids</taxon>
        <taxon>malvids</taxon>
        <taxon>Brassicales</taxon>
        <taxon>Brassicaceae</taxon>
        <taxon>Camelineae</taxon>
        <taxon>Arabidopsis</taxon>
    </lineage>
</organism>
<dbReference type="EC" id="2.4.1.173" evidence="2"/>
<dbReference type="EMBL" id="AC007203">
    <property type="protein sequence ID" value="AAD39269.1"/>
    <property type="molecule type" value="Genomic_DNA"/>
</dbReference>
<dbReference type="EMBL" id="CP002684">
    <property type="protein sequence ID" value="AEE31974.1"/>
    <property type="molecule type" value="Genomic_DNA"/>
</dbReference>
<dbReference type="EMBL" id="CP002684">
    <property type="protein sequence ID" value="AEE31975.1"/>
    <property type="molecule type" value="Genomic_DNA"/>
</dbReference>
<dbReference type="EMBL" id="CP002684">
    <property type="protein sequence ID" value="AEE31976.1"/>
    <property type="molecule type" value="Genomic_DNA"/>
</dbReference>
<dbReference type="EMBL" id="CP002684">
    <property type="protein sequence ID" value="ANM58456.1"/>
    <property type="molecule type" value="Genomic_DNA"/>
</dbReference>
<dbReference type="EMBL" id="CP002684">
    <property type="protein sequence ID" value="ANM58458.1"/>
    <property type="molecule type" value="Genomic_DNA"/>
</dbReference>
<dbReference type="EMBL" id="CP002684">
    <property type="protein sequence ID" value="ANM58459.1"/>
    <property type="molecule type" value="Genomic_DNA"/>
</dbReference>
<dbReference type="EMBL" id="CP002684">
    <property type="protein sequence ID" value="ANM58460.1"/>
    <property type="molecule type" value="Genomic_DNA"/>
</dbReference>
<dbReference type="EMBL" id="BT005834">
    <property type="protein sequence ID" value="AAO64769.1"/>
    <property type="molecule type" value="mRNA"/>
</dbReference>
<dbReference type="EMBL" id="AK227397">
    <property type="protein sequence ID" value="BAE99401.1"/>
    <property type="molecule type" value="mRNA"/>
</dbReference>
<dbReference type="PIR" id="D96499">
    <property type="entry name" value="D96499"/>
</dbReference>
<dbReference type="RefSeq" id="NP_001077674.1">
    <property type="nucleotide sequence ID" value="NM_001084205.2"/>
</dbReference>
<dbReference type="RefSeq" id="NP_001319161.1">
    <property type="nucleotide sequence ID" value="NM_001333213.1"/>
</dbReference>
<dbReference type="RefSeq" id="NP_001320888.1">
    <property type="nucleotide sequence ID" value="NM_001333215.1"/>
</dbReference>
<dbReference type="RefSeq" id="NP_001320890.1">
    <property type="nucleotide sequence ID" value="NM_001333214.1"/>
</dbReference>
<dbReference type="RefSeq" id="NP_001320891.1">
    <property type="nucleotide sequence ID" value="NM_001333216.1"/>
</dbReference>
<dbReference type="RefSeq" id="NP_175027.1">
    <property type="nucleotide sequence ID" value="NM_103487.4"/>
</dbReference>
<dbReference type="RefSeq" id="NP_973967.1">
    <property type="nucleotide sequence ID" value="NM_202238.3"/>
</dbReference>
<dbReference type="SMR" id="Q9XIG1"/>
<dbReference type="FunCoup" id="Q9XIG1">
    <property type="interactions" value="22"/>
</dbReference>
<dbReference type="STRING" id="3702.Q9XIG1"/>
<dbReference type="CAZy" id="GT1">
    <property type="family name" value="Glycosyltransferase Family 1"/>
</dbReference>
<dbReference type="iPTMnet" id="Q9XIG1"/>
<dbReference type="SwissPalm" id="Q9XIG1"/>
<dbReference type="PaxDb" id="3702-AT1G43620.1"/>
<dbReference type="ProteomicsDB" id="228678"/>
<dbReference type="EnsemblPlants" id="AT1G43620.1">
    <property type="protein sequence ID" value="AT1G43620.1"/>
    <property type="gene ID" value="AT1G43620"/>
</dbReference>
<dbReference type="EnsemblPlants" id="AT1G43620.2">
    <property type="protein sequence ID" value="AT1G43620.2"/>
    <property type="gene ID" value="AT1G43620"/>
</dbReference>
<dbReference type="EnsemblPlants" id="AT1G43620.3">
    <property type="protein sequence ID" value="AT1G43620.3"/>
    <property type="gene ID" value="AT1G43620"/>
</dbReference>
<dbReference type="EnsemblPlants" id="AT1G43620.4">
    <property type="protein sequence ID" value="AT1G43620.4"/>
    <property type="gene ID" value="AT1G43620"/>
</dbReference>
<dbReference type="EnsemblPlants" id="AT1G43620.5">
    <property type="protein sequence ID" value="AT1G43620.5"/>
    <property type="gene ID" value="AT1G43620"/>
</dbReference>
<dbReference type="EnsemblPlants" id="AT1G43620.6">
    <property type="protein sequence ID" value="AT1G43620.6"/>
    <property type="gene ID" value="AT1G43620"/>
</dbReference>
<dbReference type="EnsemblPlants" id="AT1G43620.7">
    <property type="protein sequence ID" value="AT1G43620.7"/>
    <property type="gene ID" value="AT1G43620"/>
</dbReference>
<dbReference type="GeneID" id="840946"/>
<dbReference type="Gramene" id="AT1G43620.1">
    <property type="protein sequence ID" value="AT1G43620.1"/>
    <property type="gene ID" value="AT1G43620"/>
</dbReference>
<dbReference type="Gramene" id="AT1G43620.2">
    <property type="protein sequence ID" value="AT1G43620.2"/>
    <property type="gene ID" value="AT1G43620"/>
</dbReference>
<dbReference type="Gramene" id="AT1G43620.3">
    <property type="protein sequence ID" value="AT1G43620.3"/>
    <property type="gene ID" value="AT1G43620"/>
</dbReference>
<dbReference type="Gramene" id="AT1G43620.4">
    <property type="protein sequence ID" value="AT1G43620.4"/>
    <property type="gene ID" value="AT1G43620"/>
</dbReference>
<dbReference type="Gramene" id="AT1G43620.5">
    <property type="protein sequence ID" value="AT1G43620.5"/>
    <property type="gene ID" value="AT1G43620"/>
</dbReference>
<dbReference type="Gramene" id="AT1G43620.6">
    <property type="protein sequence ID" value="AT1G43620.6"/>
    <property type="gene ID" value="AT1G43620"/>
</dbReference>
<dbReference type="Gramene" id="AT1G43620.7">
    <property type="protein sequence ID" value="AT1G43620.7"/>
    <property type="gene ID" value="AT1G43620"/>
</dbReference>
<dbReference type="KEGG" id="ath:AT1G43620"/>
<dbReference type="Araport" id="AT1G43620"/>
<dbReference type="TAIR" id="AT1G43620">
    <property type="gene designation" value="UGT80B1"/>
</dbReference>
<dbReference type="eggNOG" id="KOG1192">
    <property type="taxonomic scope" value="Eukaryota"/>
</dbReference>
<dbReference type="HOGENOM" id="CLU_000537_8_3_1"/>
<dbReference type="InParanoid" id="Q9XIG1"/>
<dbReference type="OMA" id="WIREHGI"/>
<dbReference type="PhylomeDB" id="Q9XIG1"/>
<dbReference type="BRENDA" id="2.4.1.173">
    <property type="organism ID" value="399"/>
</dbReference>
<dbReference type="PRO" id="PR:Q9XIG1"/>
<dbReference type="Proteomes" id="UP000006548">
    <property type="component" value="Chromosome 1"/>
</dbReference>
<dbReference type="ExpressionAtlas" id="Q9XIG1">
    <property type="expression patterns" value="baseline and differential"/>
</dbReference>
<dbReference type="GO" id="GO:0000325">
    <property type="term" value="C:plant-type vacuole"/>
    <property type="evidence" value="ECO:0007005"/>
    <property type="project" value="TAIR"/>
</dbReference>
<dbReference type="GO" id="GO:0016906">
    <property type="term" value="F:sterol 3-beta-glucosyltransferase activity"/>
    <property type="evidence" value="ECO:0000315"/>
    <property type="project" value="TAIR"/>
</dbReference>
<dbReference type="GO" id="GO:0005975">
    <property type="term" value="P:carbohydrate metabolic process"/>
    <property type="evidence" value="ECO:0007669"/>
    <property type="project" value="InterPro"/>
</dbReference>
<dbReference type="GO" id="GO:0009813">
    <property type="term" value="P:flavonoid biosynthetic process"/>
    <property type="evidence" value="ECO:0000315"/>
    <property type="project" value="TAIR"/>
</dbReference>
<dbReference type="GO" id="GO:0030259">
    <property type="term" value="P:lipid glycosylation"/>
    <property type="evidence" value="ECO:0007669"/>
    <property type="project" value="InterPro"/>
</dbReference>
<dbReference type="GO" id="GO:0010214">
    <property type="term" value="P:seed coat development"/>
    <property type="evidence" value="ECO:0000315"/>
    <property type="project" value="TAIR"/>
</dbReference>
<dbReference type="GO" id="GO:0009845">
    <property type="term" value="P:seed germination"/>
    <property type="evidence" value="ECO:0000315"/>
    <property type="project" value="TAIR"/>
</dbReference>
<dbReference type="GO" id="GO:0016126">
    <property type="term" value="P:sterol biosynthetic process"/>
    <property type="evidence" value="ECO:0007669"/>
    <property type="project" value="UniProtKB-KW"/>
</dbReference>
<dbReference type="GO" id="GO:0016125">
    <property type="term" value="P:sterol metabolic process"/>
    <property type="evidence" value="ECO:0000315"/>
    <property type="project" value="TAIR"/>
</dbReference>
<dbReference type="CDD" id="cd03784">
    <property type="entry name" value="GT1_Gtf-like"/>
    <property type="match status" value="1"/>
</dbReference>
<dbReference type="FunFam" id="3.40.50.2000:FF:000009">
    <property type="entry name" value="Sterol 3-beta-glucosyltransferase UGT80A2"/>
    <property type="match status" value="1"/>
</dbReference>
<dbReference type="FunFam" id="3.40.50.2000:FF:000030">
    <property type="entry name" value="Sterol 3-beta-glucosyltransferase UGT80A2"/>
    <property type="match status" value="1"/>
</dbReference>
<dbReference type="Gene3D" id="3.40.50.2000">
    <property type="entry name" value="Glycogen Phosphorylase B"/>
    <property type="match status" value="2"/>
</dbReference>
<dbReference type="InterPro" id="IPR010610">
    <property type="entry name" value="EryCIII-like_C"/>
</dbReference>
<dbReference type="InterPro" id="IPR050426">
    <property type="entry name" value="Glycosyltransferase_28"/>
</dbReference>
<dbReference type="InterPro" id="IPR004276">
    <property type="entry name" value="GlycoTrans_28_N"/>
</dbReference>
<dbReference type="InterPro" id="IPR002213">
    <property type="entry name" value="UDP_glucos_trans"/>
</dbReference>
<dbReference type="PANTHER" id="PTHR48050">
    <property type="entry name" value="STEROL 3-BETA-GLUCOSYLTRANSFERASE"/>
    <property type="match status" value="1"/>
</dbReference>
<dbReference type="PANTHER" id="PTHR48050:SF16">
    <property type="entry name" value="STEROL 3-BETA-GLUCOSYLTRANSFERASE UGT80B1"/>
    <property type="match status" value="1"/>
</dbReference>
<dbReference type="Pfam" id="PF06722">
    <property type="entry name" value="EryCIII-like_C"/>
    <property type="match status" value="1"/>
</dbReference>
<dbReference type="Pfam" id="PF03033">
    <property type="entry name" value="Glyco_transf_28"/>
    <property type="match status" value="1"/>
</dbReference>
<dbReference type="SUPFAM" id="SSF53756">
    <property type="entry name" value="UDP-Glycosyltransferase/glycogen phosphorylase"/>
    <property type="match status" value="1"/>
</dbReference>
<accession>Q9XIG1</accession>
<gene>
    <name evidence="4" type="primary">UGT80B1</name>
    <name evidence="4" type="synonym">TT15</name>
    <name evidence="6" type="ordered locus">At1g43620</name>
    <name evidence="7" type="ORF">T10P12.7</name>
</gene>
<proteinExistence type="evidence at protein level"/>
<reference key="1">
    <citation type="journal article" date="2000" name="Nature">
        <title>Sequence and analysis of chromosome 1 of the plant Arabidopsis thaliana.</title>
        <authorList>
            <person name="Theologis A."/>
            <person name="Ecker J.R."/>
            <person name="Palm C.J."/>
            <person name="Federspiel N.A."/>
            <person name="Kaul S."/>
            <person name="White O."/>
            <person name="Alonso J."/>
            <person name="Altafi H."/>
            <person name="Araujo R."/>
            <person name="Bowman C.L."/>
            <person name="Brooks S.Y."/>
            <person name="Buehler E."/>
            <person name="Chan A."/>
            <person name="Chao Q."/>
            <person name="Chen H."/>
            <person name="Cheuk R.F."/>
            <person name="Chin C.W."/>
            <person name="Chung M.K."/>
            <person name="Conn L."/>
            <person name="Conway A.B."/>
            <person name="Conway A.R."/>
            <person name="Creasy T.H."/>
            <person name="Dewar K."/>
            <person name="Dunn P."/>
            <person name="Etgu P."/>
            <person name="Feldblyum T.V."/>
            <person name="Feng J.-D."/>
            <person name="Fong B."/>
            <person name="Fujii C.Y."/>
            <person name="Gill J.E."/>
            <person name="Goldsmith A.D."/>
            <person name="Haas B."/>
            <person name="Hansen N.F."/>
            <person name="Hughes B."/>
            <person name="Huizar L."/>
            <person name="Hunter J.L."/>
            <person name="Jenkins J."/>
            <person name="Johnson-Hopson C."/>
            <person name="Khan S."/>
            <person name="Khaykin E."/>
            <person name="Kim C.J."/>
            <person name="Koo H.L."/>
            <person name="Kremenetskaia I."/>
            <person name="Kurtz D.B."/>
            <person name="Kwan A."/>
            <person name="Lam B."/>
            <person name="Langin-Hooper S."/>
            <person name="Lee A."/>
            <person name="Lee J.M."/>
            <person name="Lenz C.A."/>
            <person name="Li J.H."/>
            <person name="Li Y.-P."/>
            <person name="Lin X."/>
            <person name="Liu S.X."/>
            <person name="Liu Z.A."/>
            <person name="Luros J.S."/>
            <person name="Maiti R."/>
            <person name="Marziali A."/>
            <person name="Militscher J."/>
            <person name="Miranda M."/>
            <person name="Nguyen M."/>
            <person name="Nierman W.C."/>
            <person name="Osborne B.I."/>
            <person name="Pai G."/>
            <person name="Peterson J."/>
            <person name="Pham P.K."/>
            <person name="Rizzo M."/>
            <person name="Rooney T."/>
            <person name="Rowley D."/>
            <person name="Sakano H."/>
            <person name="Salzberg S.L."/>
            <person name="Schwartz J.R."/>
            <person name="Shinn P."/>
            <person name="Southwick A.M."/>
            <person name="Sun H."/>
            <person name="Tallon L.J."/>
            <person name="Tambunga G."/>
            <person name="Toriumi M.J."/>
            <person name="Town C.D."/>
            <person name="Utterback T."/>
            <person name="Van Aken S."/>
            <person name="Vaysberg M."/>
            <person name="Vysotskaia V.S."/>
            <person name="Walker M."/>
            <person name="Wu D."/>
            <person name="Yu G."/>
            <person name="Fraser C.M."/>
            <person name="Venter J.C."/>
            <person name="Davis R.W."/>
        </authorList>
    </citation>
    <scope>NUCLEOTIDE SEQUENCE [LARGE SCALE GENOMIC DNA]</scope>
    <source>
        <strain>cv. Columbia</strain>
    </source>
</reference>
<reference key="2">
    <citation type="journal article" date="2017" name="Plant J.">
        <title>Araport11: a complete reannotation of the Arabidopsis thaliana reference genome.</title>
        <authorList>
            <person name="Cheng C.Y."/>
            <person name="Krishnakumar V."/>
            <person name="Chan A.P."/>
            <person name="Thibaud-Nissen F."/>
            <person name="Schobel S."/>
            <person name="Town C.D."/>
        </authorList>
    </citation>
    <scope>GENOME REANNOTATION</scope>
    <source>
        <strain>cv. Columbia</strain>
    </source>
</reference>
<reference key="3">
    <citation type="journal article" date="2003" name="Science">
        <title>Empirical analysis of transcriptional activity in the Arabidopsis genome.</title>
        <authorList>
            <person name="Yamada K."/>
            <person name="Lim J."/>
            <person name="Dale J.M."/>
            <person name="Chen H."/>
            <person name="Shinn P."/>
            <person name="Palm C.J."/>
            <person name="Southwick A.M."/>
            <person name="Wu H.C."/>
            <person name="Kim C.J."/>
            <person name="Nguyen M."/>
            <person name="Pham P.K."/>
            <person name="Cheuk R.F."/>
            <person name="Karlin-Newmann G."/>
            <person name="Liu S.X."/>
            <person name="Lam B."/>
            <person name="Sakano H."/>
            <person name="Wu T."/>
            <person name="Yu G."/>
            <person name="Miranda M."/>
            <person name="Quach H.L."/>
            <person name="Tripp M."/>
            <person name="Chang C.H."/>
            <person name="Lee J.M."/>
            <person name="Toriumi M.J."/>
            <person name="Chan M.M."/>
            <person name="Tang C.C."/>
            <person name="Onodera C.S."/>
            <person name="Deng J.M."/>
            <person name="Akiyama K."/>
            <person name="Ansari Y."/>
            <person name="Arakawa T."/>
            <person name="Banh J."/>
            <person name="Banno F."/>
            <person name="Bowser L."/>
            <person name="Brooks S.Y."/>
            <person name="Carninci P."/>
            <person name="Chao Q."/>
            <person name="Choy N."/>
            <person name="Enju A."/>
            <person name="Goldsmith A.D."/>
            <person name="Gurjal M."/>
            <person name="Hansen N.F."/>
            <person name="Hayashizaki Y."/>
            <person name="Johnson-Hopson C."/>
            <person name="Hsuan V.W."/>
            <person name="Iida K."/>
            <person name="Karnes M."/>
            <person name="Khan S."/>
            <person name="Koesema E."/>
            <person name="Ishida J."/>
            <person name="Jiang P.X."/>
            <person name="Jones T."/>
            <person name="Kawai J."/>
            <person name="Kamiya A."/>
            <person name="Meyers C."/>
            <person name="Nakajima M."/>
            <person name="Narusaka M."/>
            <person name="Seki M."/>
            <person name="Sakurai T."/>
            <person name="Satou M."/>
            <person name="Tamse R."/>
            <person name="Vaysberg M."/>
            <person name="Wallender E.K."/>
            <person name="Wong C."/>
            <person name="Yamamura Y."/>
            <person name="Yuan S."/>
            <person name="Shinozaki K."/>
            <person name="Davis R.W."/>
            <person name="Theologis A."/>
            <person name="Ecker J.R."/>
        </authorList>
    </citation>
    <scope>NUCLEOTIDE SEQUENCE [LARGE SCALE MRNA]</scope>
    <source>
        <strain>cv. Columbia</strain>
    </source>
</reference>
<reference key="4">
    <citation type="submission" date="2006-07" db="EMBL/GenBank/DDBJ databases">
        <title>Large-scale analysis of RIKEN Arabidopsis full-length (RAFL) cDNAs.</title>
        <authorList>
            <person name="Totoki Y."/>
            <person name="Seki M."/>
            <person name="Ishida J."/>
            <person name="Nakajima M."/>
            <person name="Enju A."/>
            <person name="Kamiya A."/>
            <person name="Narusaka M."/>
            <person name="Shin-i T."/>
            <person name="Nakagawa M."/>
            <person name="Sakamoto N."/>
            <person name="Oishi K."/>
            <person name="Kohara Y."/>
            <person name="Kobayashi M."/>
            <person name="Toyoda A."/>
            <person name="Sakaki Y."/>
            <person name="Sakurai T."/>
            <person name="Iida K."/>
            <person name="Akiyama K."/>
            <person name="Satou M."/>
            <person name="Toyoda T."/>
            <person name="Konagaya A."/>
            <person name="Carninci P."/>
            <person name="Kawai J."/>
            <person name="Hayashizaki Y."/>
            <person name="Shinozaki K."/>
        </authorList>
    </citation>
    <scope>NUCLEOTIDE SEQUENCE [LARGE SCALE MRNA]</scope>
    <source>
        <strain>cv. Columbia</strain>
    </source>
</reference>
<reference key="5">
    <citation type="journal article" date="2009" name="Plant Physiol.">
        <title>Mutations in UDP-Glucose:sterol glucosyltransferase in Arabidopsis cause transparent testa phenotype and suberization defect in seeds.</title>
        <authorList>
            <person name="DeBolt S."/>
            <person name="Scheible W.R."/>
            <person name="Schrick K."/>
            <person name="Auer M."/>
            <person name="Beisson F."/>
            <person name="Bischoff V."/>
            <person name="Bouvier-Nave P."/>
            <person name="Carroll A."/>
            <person name="Hematy K."/>
            <person name="Li Y."/>
            <person name="Milne J."/>
            <person name="Nair M."/>
            <person name="Schaller H."/>
            <person name="Zemla M."/>
            <person name="Somerville C."/>
        </authorList>
    </citation>
    <scope>FUNCTION</scope>
    <scope>CATALYTIC ACTIVITY</scope>
    <scope>TISSUE SPECIFICITY</scope>
    <scope>DISRUPTION PHENOTYPE</scope>
</reference>
<reference key="6">
    <citation type="journal article" date="2012" name="Lipids">
        <title>Steryl glucoside and acyl steryl glucoside analysis of Arabidopsis seeds by electrospray ionization tandem mass spectrometry.</title>
        <authorList>
            <person name="Schrick K."/>
            <person name="Shiva S."/>
            <person name="Arpin J.C."/>
            <person name="Delimont N."/>
            <person name="Isaac G."/>
            <person name="Tamura P."/>
            <person name="Welti R."/>
        </authorList>
    </citation>
    <scope>FUNCTION</scope>
</reference>
<name>U80B1_ARATH</name>
<evidence type="ECO:0000256" key="1">
    <source>
        <dbReference type="SAM" id="MobiDB-lite"/>
    </source>
</evidence>
<evidence type="ECO:0000269" key="2">
    <source>
    </source>
</evidence>
<evidence type="ECO:0000269" key="3">
    <source>
    </source>
</evidence>
<evidence type="ECO:0000303" key="4">
    <source>
    </source>
</evidence>
<evidence type="ECO:0000305" key="5"/>
<evidence type="ECO:0000312" key="6">
    <source>
        <dbReference type="Araport" id="AT1G43620"/>
    </source>
</evidence>
<evidence type="ECO:0000312" key="7">
    <source>
        <dbReference type="EMBL" id="AAD39269.1"/>
    </source>
</evidence>
<keyword id="KW-0328">Glycosyltransferase</keyword>
<keyword id="KW-0444">Lipid biosynthesis</keyword>
<keyword id="KW-0443">Lipid metabolism</keyword>
<keyword id="KW-1185">Reference proteome</keyword>
<keyword id="KW-0752">Steroid biosynthesis</keyword>
<keyword id="KW-0753">Steroid metabolism</keyword>
<keyword id="KW-0756">Sterol biosynthesis</keyword>
<keyword id="KW-1207">Sterol metabolism</keyword>
<keyword id="KW-0808">Transferase</keyword>
<sequence>MASNVFDHPLQELEGEDNGVKSEKASLLETSGSVDTTPEDSGHRSSDGHRGLDHCETAPVGLYGDMLINDSEIQYSRSLTEKGSPAIHNLKLDRLSEQEKQKLIVELVRIQNDGTVEVIDNGTPVSELWEFEPTKGQSTITYEKSLTESFRSIPRLKIAILVVGTRGDVQPFLAMAKRLQEFGHRVRLATHANFRSFVRAAGVEFYPLGGDPRELAAYMARNKGLIPSGPSEISKQRKQLKAIIESLLPACIEPDLETATSFRAQAIIANPPAYGHVHVAEALGVPIHIFFTMPWTPTNEFPHPLARVPQSAAYWLSYIVVDLMVWWSIRTYINDFRKRKLNLAPIAYFSTYHGSISHLPTGYMWSPHVVPKPSDWGPLVDVVGYCFLNLGSKYQPREEFLHWIERGSPPVYIGFGSMPLDDPKQTMDIILETLKDTEQRGIVDRGWGGLGNLATEVPENVFLVEDCPHDWLFPQCSAVVHHGGAGTTATGLKAGCPTTIVPFFGDQFFWGDRIYEKGLGPAPIPIAQLSVENLSSSIRFMLQPEVKSQVMELAKVLENEDGVAAAVDAFHRHLPPELPLPESSSEKKDEDDRPDLLQWFFIQIGKKCCLPCGGV</sequence>
<protein>
    <recommendedName>
        <fullName evidence="5">Sterol 3-beta-glucosyltransferase UGT80B1</fullName>
        <ecNumber evidence="2">2.4.1.173</ecNumber>
    </recommendedName>
    <alternativeName>
        <fullName evidence="4">Protein TRANSPARENT TESTA 15</fullName>
    </alternativeName>
    <alternativeName>
        <fullName evidence="4">UDP-glucose:sterol glucosyltransferase 80B1</fullName>
    </alternativeName>
</protein>